<proteinExistence type="inferred from homology"/>
<evidence type="ECO:0000255" key="1">
    <source>
        <dbReference type="HAMAP-Rule" id="MF_01026"/>
    </source>
</evidence>
<accession>Q8CNL1</accession>
<protein>
    <recommendedName>
        <fullName evidence="1">3-isopropylmalate dehydratase large subunit</fullName>
        <ecNumber evidence="1">4.2.1.33</ecNumber>
    </recommendedName>
    <alternativeName>
        <fullName evidence="1">Alpha-IPM isomerase</fullName>
        <shortName evidence="1">IPMI</shortName>
    </alternativeName>
    <alternativeName>
        <fullName evidence="1">Isopropylmalate isomerase</fullName>
    </alternativeName>
</protein>
<dbReference type="EC" id="4.2.1.33" evidence="1"/>
<dbReference type="EMBL" id="AE015929">
    <property type="protein sequence ID" value="AAO05259.1"/>
    <property type="molecule type" value="Genomic_DNA"/>
</dbReference>
<dbReference type="RefSeq" id="NP_765215.1">
    <property type="nucleotide sequence ID" value="NC_004461.1"/>
</dbReference>
<dbReference type="RefSeq" id="WP_001832489.1">
    <property type="nucleotide sequence ID" value="NZ_WBME01000022.1"/>
</dbReference>
<dbReference type="SMR" id="Q8CNL1"/>
<dbReference type="DNASU" id="1057018"/>
<dbReference type="KEGG" id="sep:SE_1660"/>
<dbReference type="PATRIC" id="fig|176280.10.peg.1624"/>
<dbReference type="eggNOG" id="COG0065">
    <property type="taxonomic scope" value="Bacteria"/>
</dbReference>
<dbReference type="HOGENOM" id="CLU_006714_3_4_9"/>
<dbReference type="OrthoDB" id="9802769at2"/>
<dbReference type="UniPathway" id="UPA00048">
    <property type="reaction ID" value="UER00071"/>
</dbReference>
<dbReference type="Proteomes" id="UP000001411">
    <property type="component" value="Chromosome"/>
</dbReference>
<dbReference type="GO" id="GO:0003861">
    <property type="term" value="F:3-isopropylmalate dehydratase activity"/>
    <property type="evidence" value="ECO:0007669"/>
    <property type="project" value="UniProtKB-UniRule"/>
</dbReference>
<dbReference type="GO" id="GO:0051539">
    <property type="term" value="F:4 iron, 4 sulfur cluster binding"/>
    <property type="evidence" value="ECO:0007669"/>
    <property type="project" value="UniProtKB-KW"/>
</dbReference>
<dbReference type="GO" id="GO:0046872">
    <property type="term" value="F:metal ion binding"/>
    <property type="evidence" value="ECO:0007669"/>
    <property type="project" value="UniProtKB-KW"/>
</dbReference>
<dbReference type="GO" id="GO:0009098">
    <property type="term" value="P:L-leucine biosynthetic process"/>
    <property type="evidence" value="ECO:0007669"/>
    <property type="project" value="UniProtKB-UniRule"/>
</dbReference>
<dbReference type="CDD" id="cd01583">
    <property type="entry name" value="IPMI"/>
    <property type="match status" value="1"/>
</dbReference>
<dbReference type="Gene3D" id="3.30.499.10">
    <property type="entry name" value="Aconitase, domain 3"/>
    <property type="match status" value="2"/>
</dbReference>
<dbReference type="HAMAP" id="MF_01026">
    <property type="entry name" value="LeuC_type1"/>
    <property type="match status" value="1"/>
</dbReference>
<dbReference type="InterPro" id="IPR004430">
    <property type="entry name" value="3-IsopropMal_deHydase_lsu"/>
</dbReference>
<dbReference type="InterPro" id="IPR015931">
    <property type="entry name" value="Acnase/IPM_dHydase_lsu_aba_1/3"/>
</dbReference>
<dbReference type="InterPro" id="IPR001030">
    <property type="entry name" value="Acoase/IPM_deHydtase_lsu_aba"/>
</dbReference>
<dbReference type="InterPro" id="IPR018136">
    <property type="entry name" value="Aconitase_4Fe-4S_BS"/>
</dbReference>
<dbReference type="InterPro" id="IPR036008">
    <property type="entry name" value="Aconitase_4Fe-4S_dom"/>
</dbReference>
<dbReference type="InterPro" id="IPR050067">
    <property type="entry name" value="IPM_dehydratase_rel_enz"/>
</dbReference>
<dbReference type="InterPro" id="IPR033941">
    <property type="entry name" value="IPMI_cat"/>
</dbReference>
<dbReference type="NCBIfam" id="TIGR00170">
    <property type="entry name" value="leuC"/>
    <property type="match status" value="1"/>
</dbReference>
<dbReference type="NCBIfam" id="NF004016">
    <property type="entry name" value="PRK05478.1"/>
    <property type="match status" value="1"/>
</dbReference>
<dbReference type="NCBIfam" id="NF009116">
    <property type="entry name" value="PRK12466.1"/>
    <property type="match status" value="1"/>
</dbReference>
<dbReference type="PANTHER" id="PTHR43822:SF9">
    <property type="entry name" value="3-ISOPROPYLMALATE DEHYDRATASE"/>
    <property type="match status" value="1"/>
</dbReference>
<dbReference type="PANTHER" id="PTHR43822">
    <property type="entry name" value="HOMOACONITASE, MITOCHONDRIAL-RELATED"/>
    <property type="match status" value="1"/>
</dbReference>
<dbReference type="Pfam" id="PF00330">
    <property type="entry name" value="Aconitase"/>
    <property type="match status" value="1"/>
</dbReference>
<dbReference type="PRINTS" id="PR00415">
    <property type="entry name" value="ACONITASE"/>
</dbReference>
<dbReference type="SUPFAM" id="SSF53732">
    <property type="entry name" value="Aconitase iron-sulfur domain"/>
    <property type="match status" value="1"/>
</dbReference>
<dbReference type="PROSITE" id="PS00450">
    <property type="entry name" value="ACONITASE_1"/>
    <property type="match status" value="1"/>
</dbReference>
<dbReference type="PROSITE" id="PS01244">
    <property type="entry name" value="ACONITASE_2"/>
    <property type="match status" value="1"/>
</dbReference>
<reference key="1">
    <citation type="journal article" date="2003" name="Mol. Microbiol.">
        <title>Genome-based analysis of virulence genes in a non-biofilm-forming Staphylococcus epidermidis strain (ATCC 12228).</title>
        <authorList>
            <person name="Zhang Y.-Q."/>
            <person name="Ren S.-X."/>
            <person name="Li H.-L."/>
            <person name="Wang Y.-X."/>
            <person name="Fu G."/>
            <person name="Yang J."/>
            <person name="Qin Z.-Q."/>
            <person name="Miao Y.-G."/>
            <person name="Wang W.-Y."/>
            <person name="Chen R.-S."/>
            <person name="Shen Y."/>
            <person name="Chen Z."/>
            <person name="Yuan Z.-H."/>
            <person name="Zhao G.-P."/>
            <person name="Qu D."/>
            <person name="Danchin A."/>
            <person name="Wen Y.-M."/>
        </authorList>
    </citation>
    <scope>NUCLEOTIDE SEQUENCE [LARGE SCALE GENOMIC DNA]</scope>
    <source>
        <strain>ATCC 12228 / FDA PCI 1200</strain>
    </source>
</reference>
<organism>
    <name type="scientific">Staphylococcus epidermidis (strain ATCC 12228 / FDA PCI 1200)</name>
    <dbReference type="NCBI Taxonomy" id="176280"/>
    <lineage>
        <taxon>Bacteria</taxon>
        <taxon>Bacillati</taxon>
        <taxon>Bacillota</taxon>
        <taxon>Bacilli</taxon>
        <taxon>Bacillales</taxon>
        <taxon>Staphylococcaceae</taxon>
        <taxon>Staphylococcus</taxon>
    </lineage>
</organism>
<comment type="function">
    <text evidence="1">Catalyzes the isomerization between 2-isopropylmalate and 3-isopropylmalate, via the formation of 2-isopropylmaleate.</text>
</comment>
<comment type="catalytic activity">
    <reaction evidence="1">
        <text>(2R,3S)-3-isopropylmalate = (2S)-2-isopropylmalate</text>
        <dbReference type="Rhea" id="RHEA:32287"/>
        <dbReference type="ChEBI" id="CHEBI:1178"/>
        <dbReference type="ChEBI" id="CHEBI:35121"/>
        <dbReference type="EC" id="4.2.1.33"/>
    </reaction>
</comment>
<comment type="cofactor">
    <cofactor evidence="1">
        <name>[4Fe-4S] cluster</name>
        <dbReference type="ChEBI" id="CHEBI:49883"/>
    </cofactor>
    <text evidence="1">Binds 1 [4Fe-4S] cluster per subunit.</text>
</comment>
<comment type="pathway">
    <text evidence="1">Amino-acid biosynthesis; L-leucine biosynthesis; L-leucine from 3-methyl-2-oxobutanoate: step 2/4.</text>
</comment>
<comment type="subunit">
    <text evidence="1">Heterodimer of LeuC and LeuD.</text>
</comment>
<comment type="similarity">
    <text evidence="1">Belongs to the aconitase/IPM isomerase family. LeuC type 1 subfamily.</text>
</comment>
<gene>
    <name evidence="1" type="primary">leuC</name>
    <name type="ordered locus">SE_1660</name>
</gene>
<keyword id="KW-0004">4Fe-4S</keyword>
<keyword id="KW-0028">Amino-acid biosynthesis</keyword>
<keyword id="KW-0100">Branched-chain amino acid biosynthesis</keyword>
<keyword id="KW-0408">Iron</keyword>
<keyword id="KW-0411">Iron-sulfur</keyword>
<keyword id="KW-0432">Leucine biosynthesis</keyword>
<keyword id="KW-0456">Lyase</keyword>
<keyword id="KW-0479">Metal-binding</keyword>
<name>LEUC_STAES</name>
<sequence length="456" mass="50399">MGQTLFDKVWKKHVLHGKEGEPQLLYIDLHLIHEVTSPQAFEGLRIQNRKLRRPDLTFATLDHNVPTIDIFNIKDEIANKQITTLQQNAKDFGVHIFDMGSDEQGIVHMVGPETGLTQPGKTIVCGDSHTATHGAFGAIAFGIGTSEVEHVFATQTLWQTKPKNLKININGSLPAGVYAKDIILYLINQYGVDFGTGYALEFTGETIKNLSMEARMTICNMAIEAGAKYGLMQPDETTFNYVKGRPYATDFDSSMAWWKELYSDDDAYFDKVIELDVTNLEPQVTWGTNPEMGVSFSNPFPEIKNANDQRAYDYMGLHPGQKAEDIKLGYVFLGSCTNARLSDLIEASHIIKGQQVHPNITAIVVPGSRTVKKEAEALGLDKLFKDAGFEWREPGCSMCLGMNPDQVPEGVHCASTSNRNFEGRQGKGARTHLVSPVMAAAAAINGKFIDVRKVVV</sequence>
<feature type="chain" id="PRO_0000076817" description="3-isopropylmalate dehydratase large subunit">
    <location>
        <begin position="1"/>
        <end position="456"/>
    </location>
</feature>
<feature type="binding site" evidence="1">
    <location>
        <position position="336"/>
    </location>
    <ligand>
        <name>[4Fe-4S] cluster</name>
        <dbReference type="ChEBI" id="CHEBI:49883"/>
    </ligand>
</feature>
<feature type="binding site" evidence="1">
    <location>
        <position position="396"/>
    </location>
    <ligand>
        <name>[4Fe-4S] cluster</name>
        <dbReference type="ChEBI" id="CHEBI:49883"/>
    </ligand>
</feature>
<feature type="binding site" evidence="1">
    <location>
        <position position="399"/>
    </location>
    <ligand>
        <name>[4Fe-4S] cluster</name>
        <dbReference type="ChEBI" id="CHEBI:49883"/>
    </ligand>
</feature>